<gene>
    <name type="ordered locus">slr0782</name>
</gene>
<dbReference type="EC" id="1.4.5.-" evidence="5"/>
<dbReference type="EMBL" id="BA000022">
    <property type="protein sequence ID" value="BAA10142.1"/>
    <property type="molecule type" value="Genomic_DNA"/>
</dbReference>
<dbReference type="PIR" id="S76290">
    <property type="entry name" value="S76290"/>
</dbReference>
<dbReference type="SMR" id="Q55629"/>
<dbReference type="STRING" id="1148.gene:10499635"/>
<dbReference type="PaxDb" id="1148-1001515"/>
<dbReference type="EnsemblBacteria" id="BAA10142">
    <property type="protein sequence ID" value="BAA10142"/>
    <property type="gene ID" value="BAA10142"/>
</dbReference>
<dbReference type="KEGG" id="syn:slr0782"/>
<dbReference type="eggNOG" id="COG1231">
    <property type="taxonomic scope" value="Bacteria"/>
</dbReference>
<dbReference type="InParanoid" id="Q55629"/>
<dbReference type="PhylomeDB" id="Q55629"/>
<dbReference type="BRENDA" id="1.4.1.5">
    <property type="organism ID" value="382"/>
</dbReference>
<dbReference type="UniPathway" id="UPA00073"/>
<dbReference type="Proteomes" id="UP000001425">
    <property type="component" value="Chromosome"/>
</dbReference>
<dbReference type="GO" id="GO:0031676">
    <property type="term" value="C:plasma membrane-derived thylakoid membrane"/>
    <property type="evidence" value="ECO:0007669"/>
    <property type="project" value="UniProtKB-SubCell"/>
</dbReference>
<dbReference type="GO" id="GO:0046872">
    <property type="term" value="F:metal ion binding"/>
    <property type="evidence" value="ECO:0007669"/>
    <property type="project" value="UniProtKB-KW"/>
</dbReference>
<dbReference type="GO" id="GO:0016491">
    <property type="term" value="F:oxidoreductase activity"/>
    <property type="evidence" value="ECO:0007669"/>
    <property type="project" value="UniProtKB-KW"/>
</dbReference>
<dbReference type="GO" id="GO:0006527">
    <property type="term" value="P:arginine catabolic process"/>
    <property type="evidence" value="ECO:0007669"/>
    <property type="project" value="UniProtKB-UniPathway"/>
</dbReference>
<dbReference type="Gene3D" id="3.90.660.10">
    <property type="match status" value="1"/>
</dbReference>
<dbReference type="Gene3D" id="3.50.50.60">
    <property type="entry name" value="FAD/NAD(P)-binding domain"/>
    <property type="match status" value="1"/>
</dbReference>
<dbReference type="Gene3D" id="1.10.405.10">
    <property type="entry name" value="Guanine Nucleotide Dissociation Inhibitor, domain 1"/>
    <property type="match status" value="1"/>
</dbReference>
<dbReference type="InterPro" id="IPR002937">
    <property type="entry name" value="Amino_oxidase"/>
</dbReference>
<dbReference type="InterPro" id="IPR036188">
    <property type="entry name" value="FAD/NAD-bd_sf"/>
</dbReference>
<dbReference type="InterPro" id="IPR001613">
    <property type="entry name" value="Flavin_amine_oxidase"/>
</dbReference>
<dbReference type="InterPro" id="IPR050703">
    <property type="entry name" value="Flavin_MAO"/>
</dbReference>
<dbReference type="PANTHER" id="PTHR43563">
    <property type="entry name" value="AMINE OXIDASE"/>
    <property type="match status" value="1"/>
</dbReference>
<dbReference type="PANTHER" id="PTHR43563:SF1">
    <property type="entry name" value="AMINE OXIDASE [FLAVIN-CONTAINING] B"/>
    <property type="match status" value="1"/>
</dbReference>
<dbReference type="Pfam" id="PF01593">
    <property type="entry name" value="Amino_oxidase"/>
    <property type="match status" value="1"/>
</dbReference>
<dbReference type="PRINTS" id="PR00757">
    <property type="entry name" value="AMINEOXDASEF"/>
</dbReference>
<dbReference type="SUPFAM" id="SSF54373">
    <property type="entry name" value="FAD-linked reductases, C-terminal domain"/>
    <property type="match status" value="1"/>
</dbReference>
<dbReference type="SUPFAM" id="SSF51905">
    <property type="entry name" value="FAD/NAD(P)-binding domain"/>
    <property type="match status" value="1"/>
</dbReference>
<protein>
    <recommendedName>
        <fullName evidence="3">L-amino acid dehydrogenase</fullName>
        <ecNumber evidence="5">1.4.5.-</ecNumber>
    </recommendedName>
    <alternativeName>
        <fullName evidence="3">L-amino acid:plastoquinone oxidoreductase</fullName>
    </alternativeName>
    <alternativeName>
        <fullName evidence="3">L-arginine dehydrogenase</fullName>
    </alternativeName>
</protein>
<keyword id="KW-0274">FAD</keyword>
<keyword id="KW-0285">Flavoprotein</keyword>
<keyword id="KW-0460">Magnesium</keyword>
<keyword id="KW-0472">Membrane</keyword>
<keyword id="KW-0479">Metal-binding</keyword>
<keyword id="KW-0560">Oxidoreductase</keyword>
<keyword id="KW-1185">Reference proteome</keyword>
<keyword id="KW-0793">Thylakoid</keyword>
<accession>Q55629</accession>
<organism>
    <name type="scientific">Synechocystis sp. (strain ATCC 27184 / PCC 6803 / Kazusa)</name>
    <dbReference type="NCBI Taxonomy" id="1111708"/>
    <lineage>
        <taxon>Bacteria</taxon>
        <taxon>Bacillati</taxon>
        <taxon>Cyanobacteriota</taxon>
        <taxon>Cyanophyceae</taxon>
        <taxon>Synechococcales</taxon>
        <taxon>Merismopediaceae</taxon>
        <taxon>Synechocystis</taxon>
    </lineage>
</organism>
<feature type="chain" id="PRO_0000099869" description="L-amino acid dehydrogenase">
    <location>
        <begin position="1"/>
        <end position="471"/>
    </location>
</feature>
<feature type="binding site" evidence="1">
    <location>
        <position position="31"/>
    </location>
    <ligand>
        <name>Mg(2+)</name>
        <dbReference type="ChEBI" id="CHEBI:18420"/>
    </ligand>
</feature>
<feature type="binding site" evidence="1">
    <location>
        <position position="33"/>
    </location>
    <ligand>
        <name>FAD</name>
        <dbReference type="ChEBI" id="CHEBI:57692"/>
    </ligand>
</feature>
<feature type="binding site" evidence="1">
    <location>
        <position position="34"/>
    </location>
    <ligand>
        <name>Mg(2+)</name>
        <dbReference type="ChEBI" id="CHEBI:18420"/>
    </ligand>
</feature>
<feature type="binding site" evidence="1">
    <location>
        <position position="52"/>
    </location>
    <ligand>
        <name>FAD</name>
        <dbReference type="ChEBI" id="CHEBI:57692"/>
    </ligand>
</feature>
<feature type="binding site" evidence="1">
    <location>
        <position position="60"/>
    </location>
    <ligand>
        <name>FAD</name>
        <dbReference type="ChEBI" id="CHEBI:57692"/>
    </ligand>
</feature>
<feature type="binding site" evidence="1">
    <location>
        <position position="256"/>
    </location>
    <ligand>
        <name>FAD</name>
        <dbReference type="ChEBI" id="CHEBI:57692"/>
    </ligand>
</feature>
<feature type="binding site" evidence="1">
    <location>
        <position position="283"/>
    </location>
    <ligand>
        <name>Mg(2+)</name>
        <dbReference type="ChEBI" id="CHEBI:18420"/>
    </ligand>
</feature>
<feature type="binding site" evidence="1">
    <location>
        <position position="453"/>
    </location>
    <ligand>
        <name>FAD</name>
        <dbReference type="ChEBI" id="CHEBI:57692"/>
    </ligand>
</feature>
<comment type="function">
    <text evidence="2">L-amino acid dehydrogenase with broad substrate specificity. Catalyzes the oxidative deamination of various L-amino acids, L-Arg and L-Cys being the best substrates in vitro. Likely functions mainly as an L-arginine dehydrogenase in vivo. Probably feeds electrons from L-arginine oxidation and also from the oxidation of other L-amino acids into the respiratory electron transport chain associated to the thylakoid membrane, and does not directly interact with molecular oxygen but donates electrons to the plastoquinone pool. Cannot use D-amino acids as substrates.</text>
</comment>
<comment type="catalytic activity">
    <reaction evidence="5">
        <text>a plastoquinone + an L-alpha-amino acid + H2O = a plastoquinol + a 2-oxocarboxylate + NH4(+)</text>
        <dbReference type="Rhea" id="RHEA:53020"/>
        <dbReference type="Rhea" id="RHEA-COMP:9561"/>
        <dbReference type="Rhea" id="RHEA-COMP:9562"/>
        <dbReference type="ChEBI" id="CHEBI:15377"/>
        <dbReference type="ChEBI" id="CHEBI:17757"/>
        <dbReference type="ChEBI" id="CHEBI:28938"/>
        <dbReference type="ChEBI" id="CHEBI:35179"/>
        <dbReference type="ChEBI" id="CHEBI:59869"/>
        <dbReference type="ChEBI" id="CHEBI:62192"/>
    </reaction>
</comment>
<comment type="catalytic activity">
    <reaction evidence="5">
        <text>a plastoquinone + L-arginine + H2O = a plastoquinol + 5-guanidino-2-oxopentanoate + NH4(+)</text>
        <dbReference type="Rhea" id="RHEA:53024"/>
        <dbReference type="Rhea" id="RHEA-COMP:9561"/>
        <dbReference type="Rhea" id="RHEA-COMP:9562"/>
        <dbReference type="ChEBI" id="CHEBI:15377"/>
        <dbReference type="ChEBI" id="CHEBI:17757"/>
        <dbReference type="ChEBI" id="CHEBI:28938"/>
        <dbReference type="ChEBI" id="CHEBI:32682"/>
        <dbReference type="ChEBI" id="CHEBI:58489"/>
        <dbReference type="ChEBI" id="CHEBI:62192"/>
    </reaction>
</comment>
<comment type="cofactor">
    <cofactor evidence="1">
        <name>FAD</name>
        <dbReference type="ChEBI" id="CHEBI:57692"/>
    </cofactor>
    <text evidence="1">Binds 1 FAD per subunit.</text>
</comment>
<comment type="cofactor">
    <cofactor evidence="1">
        <name>Mg(2+)</name>
        <dbReference type="ChEBI" id="CHEBI:18420"/>
    </cofactor>
</comment>
<comment type="activity regulation">
    <text evidence="2">Inhibited by Ca(2+) and other cations such as Ni(2+), Co(2+) and Zn(2+). The inhibition by o-phenanthroline and salicylhydroxamic acid suggests the presence of a metal cofactor besides FAD in the enzyme. The L-arginine-stimulated O(2) consumption involving slr0782 is inhibited by inhibitors of the respiratory electron transport chain, such as KCN and 2,5-dibromo-3-methyl-6-isopropyl-p-benzoquinone, which indicates a participation of the cytochrome b6/f complex and of a cytochrome oxidase.</text>
</comment>
<comment type="biophysicochemical properties">
    <kinetics>
        <KM evidence="2">3.2 mM for L-arginine</KM>
    </kinetics>
</comment>
<comment type="pathway">
    <text evidence="5">Amino-acid degradation; L-arginine degradation.</text>
</comment>
<comment type="subcellular location">
    <subcellularLocation>
        <location evidence="2">Cellular thylakoid membrane</location>
    </subcellularLocation>
</comment>
<comment type="induction">
    <text evidence="2">Up-regulated when cells are grown with L-arginine as compared to the growth of cells with nitrate (at mRNA and protein level). The increase is substantially higher in the PsbO-free mutant than in wild-type.</text>
</comment>
<comment type="similarity">
    <text evidence="4">Belongs to the flavin monoamine oxidase family.</text>
</comment>
<proteinExistence type="evidence at protein level"/>
<name>LAADH_SYNY3</name>
<reference key="1">
    <citation type="journal article" date="1995" name="DNA Res.">
        <title>Sequence analysis of the genome of the unicellular cyanobacterium Synechocystis sp. strain PCC6803. I. Sequence features in the 1 Mb region from map positions 64% to 92% of the genome.</title>
        <authorList>
            <person name="Kaneko T."/>
            <person name="Tanaka A."/>
            <person name="Sato S."/>
            <person name="Kotani H."/>
            <person name="Sazuka T."/>
            <person name="Miyajima N."/>
            <person name="Sugiura M."/>
            <person name="Tabata S."/>
        </authorList>
    </citation>
    <scope>NUCLEOTIDE SEQUENCE [LARGE SCALE GENOMIC DNA]</scope>
    <source>
        <strain>ATCC 27184 / PCC 6803 / N-1</strain>
    </source>
</reference>
<reference key="2">
    <citation type="journal article" date="1996" name="DNA Res.">
        <title>Sequence analysis of the genome of the unicellular cyanobacterium Synechocystis sp. strain PCC6803. II. Sequence determination of the entire genome and assignment of potential protein-coding regions.</title>
        <authorList>
            <person name="Kaneko T."/>
            <person name="Sato S."/>
            <person name="Kotani H."/>
            <person name="Tanaka A."/>
            <person name="Asamizu E."/>
            <person name="Nakamura Y."/>
            <person name="Miyajima N."/>
            <person name="Hirosawa M."/>
            <person name="Sugiura M."/>
            <person name="Sasamoto S."/>
            <person name="Kimura T."/>
            <person name="Hosouchi T."/>
            <person name="Matsuno A."/>
            <person name="Muraki A."/>
            <person name="Nakazaki N."/>
            <person name="Naruo K."/>
            <person name="Okumura S."/>
            <person name="Shimpo S."/>
            <person name="Takeuchi C."/>
            <person name="Wada T."/>
            <person name="Watanabe A."/>
            <person name="Yamada M."/>
            <person name="Yasuda M."/>
            <person name="Tabata S."/>
        </authorList>
    </citation>
    <scope>NUCLEOTIDE SEQUENCE [LARGE SCALE GENOMIC DNA]</scope>
    <source>
        <strain>ATCC 27184 / PCC 6803 / Kazusa</strain>
    </source>
</reference>
<reference key="3">
    <citation type="journal article" date="2009" name="J. Exp. Bot.">
        <title>Detection of an L-amino acid dehydrogenase activity in Synechocystis sp. PCC 6803.</title>
        <authorList>
            <person name="Schriek S."/>
            <person name="Kahmann U."/>
            <person name="Staiger D."/>
            <person name="Pistorius E.K."/>
            <person name="Michel K.P."/>
        </authorList>
    </citation>
    <scope>FUNCTION</scope>
    <scope>CATALYTIC ACTIVITY</scope>
    <scope>SUBSTRATE SPECIFICITY</scope>
    <scope>BIOPHYSICOCHEMICAL PROPERTIES</scope>
    <scope>ACTIVITY REGULATION</scope>
    <scope>SUBCELLULAR LOCATION</scope>
    <scope>INDUCTION</scope>
    <scope>PATHWAY</scope>
    <source>
        <strain>ATCC 27184 / PCC 6803 / N-1</strain>
    </source>
</reference>
<sequence length="471" mass="51404">MVIRSGKTNLNPPCALMAPSSSCDCIIVGSGLSGLIAARNLSRVNYSVLVIEAQERLGGRMYGEYLPSGQWIDRGGQWVGPTQDRFLALLNEYNIERFPSPADGLKVLLFDGKRYEFDGFFQGVFQGEAPKISSDEWNDAMVAWEKFNTLAQSLDEQHPEATPENKKLDSQTFADWIKENTHTAFGHWYFSYMCRAVGFLGPAEPSQVSLLHILWGHKSASQGENPEAELLHGGAGQIPQKIAAELGNSILLGEPVIHIAQDDKGVEVTTTTGKYQGKFAIVATPPHLAGRITYSPPMPPLRQQLTQRVPMGTCCKLLISYDRPFWREKGLAGIGLGNTTWIELCADSSDPTTGVGVIASFVVGDRYGKWIAMGEAERRQGVLSDLALYFGEEALSPETYDEVDWPSEQWVGGGYAAFMPPGVWTSFGQALSAPVGRIHWAGTEIAPRWAGFFDGAIRTGEAAAKAIIGLL</sequence>
<evidence type="ECO:0000250" key="1">
    <source>
        <dbReference type="UniProtKB" id="Q9S3V1"/>
    </source>
</evidence>
<evidence type="ECO:0000269" key="2">
    <source>
    </source>
</evidence>
<evidence type="ECO:0000303" key="3">
    <source>
    </source>
</evidence>
<evidence type="ECO:0000305" key="4"/>
<evidence type="ECO:0000305" key="5">
    <source>
    </source>
</evidence>